<accession>Q5HKZ7</accession>
<evidence type="ECO:0000255" key="1">
    <source>
        <dbReference type="HAMAP-Rule" id="MF_01540"/>
    </source>
</evidence>
<comment type="function">
    <text evidence="1">Component of the sulfite reductase complex that catalyzes the 6-electron reduction of sulfite to sulfide. This is one of several activities required for the biosynthesis of L-cysteine from sulfate.</text>
</comment>
<comment type="catalytic activity">
    <reaction evidence="1">
        <text>hydrogen sulfide + 3 NADP(+) + 3 H2O = sulfite + 3 NADPH + 4 H(+)</text>
        <dbReference type="Rhea" id="RHEA:13801"/>
        <dbReference type="ChEBI" id="CHEBI:15377"/>
        <dbReference type="ChEBI" id="CHEBI:15378"/>
        <dbReference type="ChEBI" id="CHEBI:17359"/>
        <dbReference type="ChEBI" id="CHEBI:29919"/>
        <dbReference type="ChEBI" id="CHEBI:57783"/>
        <dbReference type="ChEBI" id="CHEBI:58349"/>
        <dbReference type="EC" id="1.8.1.2"/>
    </reaction>
</comment>
<comment type="cofactor">
    <cofactor evidence="1">
        <name>siroheme</name>
        <dbReference type="ChEBI" id="CHEBI:60052"/>
    </cofactor>
    <text evidence="1">Binds 1 siroheme per subunit.</text>
</comment>
<comment type="cofactor">
    <cofactor evidence="1">
        <name>[4Fe-4S] cluster</name>
        <dbReference type="ChEBI" id="CHEBI:49883"/>
    </cofactor>
    <text evidence="1">Binds 1 [4Fe-4S] cluster per subunit.</text>
</comment>
<comment type="pathway">
    <text evidence="1">Sulfur metabolism; hydrogen sulfide biosynthesis; hydrogen sulfide from sulfite (NADPH route): step 1/1.</text>
</comment>
<comment type="subunit">
    <text evidence="1">Alpha(8)-beta(8). The alpha component is a flavoprotein, the beta component is a hemoprotein.</text>
</comment>
<comment type="similarity">
    <text evidence="1">Belongs to the nitrite and sulfite reductase 4Fe-4S domain family.</text>
</comment>
<protein>
    <recommendedName>
        <fullName evidence="1">Sulfite reductase [NADPH] hemoprotein beta-component</fullName>
        <shortName evidence="1">SiR-HP</shortName>
        <shortName evidence="1">SiRHP</shortName>
        <ecNumber evidence="1">1.8.1.2</ecNumber>
    </recommendedName>
</protein>
<proteinExistence type="inferred from homology"/>
<organism>
    <name type="scientific">Staphylococcus epidermidis (strain ATCC 35984 / DSM 28319 / BCRC 17069 / CCUG 31568 / BM 3577 / RP62A)</name>
    <dbReference type="NCBI Taxonomy" id="176279"/>
    <lineage>
        <taxon>Bacteria</taxon>
        <taxon>Bacillati</taxon>
        <taxon>Bacillota</taxon>
        <taxon>Bacilli</taxon>
        <taxon>Bacillales</taxon>
        <taxon>Staphylococcaceae</taxon>
        <taxon>Staphylococcus</taxon>
    </lineage>
</organism>
<dbReference type="EC" id="1.8.1.2" evidence="1"/>
<dbReference type="EMBL" id="CP000029">
    <property type="protein sequence ID" value="AAW53001.1"/>
    <property type="molecule type" value="Genomic_DNA"/>
</dbReference>
<dbReference type="RefSeq" id="WP_002468762.1">
    <property type="nucleotide sequence ID" value="NC_002976.3"/>
</dbReference>
<dbReference type="SMR" id="Q5HKZ7"/>
<dbReference type="STRING" id="176279.SERP2190"/>
<dbReference type="KEGG" id="ser:SERP2190"/>
<dbReference type="eggNOG" id="COG0155">
    <property type="taxonomic scope" value="Bacteria"/>
</dbReference>
<dbReference type="HOGENOM" id="CLU_001975_3_2_9"/>
<dbReference type="UniPathway" id="UPA00140">
    <property type="reaction ID" value="UER00207"/>
</dbReference>
<dbReference type="Proteomes" id="UP000000531">
    <property type="component" value="Chromosome"/>
</dbReference>
<dbReference type="GO" id="GO:0009337">
    <property type="term" value="C:sulfite reductase complex (NADPH)"/>
    <property type="evidence" value="ECO:0007669"/>
    <property type="project" value="InterPro"/>
</dbReference>
<dbReference type="GO" id="GO:0051539">
    <property type="term" value="F:4 iron, 4 sulfur cluster binding"/>
    <property type="evidence" value="ECO:0007669"/>
    <property type="project" value="UniProtKB-KW"/>
</dbReference>
<dbReference type="GO" id="GO:0020037">
    <property type="term" value="F:heme binding"/>
    <property type="evidence" value="ECO:0007669"/>
    <property type="project" value="InterPro"/>
</dbReference>
<dbReference type="GO" id="GO:0046872">
    <property type="term" value="F:metal ion binding"/>
    <property type="evidence" value="ECO:0007669"/>
    <property type="project" value="UniProtKB-KW"/>
</dbReference>
<dbReference type="GO" id="GO:0050661">
    <property type="term" value="F:NADP binding"/>
    <property type="evidence" value="ECO:0007669"/>
    <property type="project" value="InterPro"/>
</dbReference>
<dbReference type="GO" id="GO:0050311">
    <property type="term" value="F:sulfite reductase (ferredoxin) activity"/>
    <property type="evidence" value="ECO:0007669"/>
    <property type="project" value="TreeGrafter"/>
</dbReference>
<dbReference type="GO" id="GO:0004783">
    <property type="term" value="F:sulfite reductase (NADPH) activity"/>
    <property type="evidence" value="ECO:0007669"/>
    <property type="project" value="UniProtKB-UniRule"/>
</dbReference>
<dbReference type="GO" id="GO:0019344">
    <property type="term" value="P:cysteine biosynthetic process"/>
    <property type="evidence" value="ECO:0007669"/>
    <property type="project" value="UniProtKB-KW"/>
</dbReference>
<dbReference type="GO" id="GO:0070814">
    <property type="term" value="P:hydrogen sulfide biosynthetic process"/>
    <property type="evidence" value="ECO:0007669"/>
    <property type="project" value="UniProtKB-UniRule"/>
</dbReference>
<dbReference type="GO" id="GO:0000103">
    <property type="term" value="P:sulfate assimilation"/>
    <property type="evidence" value="ECO:0007669"/>
    <property type="project" value="UniProtKB-UniRule"/>
</dbReference>
<dbReference type="FunFam" id="3.30.413.10:FF:000003">
    <property type="entry name" value="Sulfite reductase [NADPH] hemoprotein beta-component"/>
    <property type="match status" value="1"/>
</dbReference>
<dbReference type="FunFam" id="3.30.413.10:FF:000004">
    <property type="entry name" value="Sulfite reductase [NADPH] hemoprotein beta-component"/>
    <property type="match status" value="1"/>
</dbReference>
<dbReference type="Gene3D" id="3.30.413.10">
    <property type="entry name" value="Sulfite Reductase Hemoprotein, domain 1"/>
    <property type="match status" value="2"/>
</dbReference>
<dbReference type="HAMAP" id="MF_01540">
    <property type="entry name" value="CysI"/>
    <property type="match status" value="1"/>
</dbReference>
<dbReference type="InterPro" id="IPR011786">
    <property type="entry name" value="CysI"/>
</dbReference>
<dbReference type="InterPro" id="IPR005117">
    <property type="entry name" value="NiRdtase/SiRdtase_haem-b_fer"/>
</dbReference>
<dbReference type="InterPro" id="IPR036136">
    <property type="entry name" value="Nit/Sulf_reduc_fer-like_dom_sf"/>
</dbReference>
<dbReference type="InterPro" id="IPR006067">
    <property type="entry name" value="NO2/SO3_Rdtase_4Fe4S_dom"/>
</dbReference>
<dbReference type="InterPro" id="IPR045169">
    <property type="entry name" value="NO2/SO3_Rdtase_4Fe4S_prot"/>
</dbReference>
<dbReference type="InterPro" id="IPR045854">
    <property type="entry name" value="NO2/SO3_Rdtase_4Fe4S_sf"/>
</dbReference>
<dbReference type="InterPro" id="IPR006066">
    <property type="entry name" value="NO2/SO3_Rdtase_FeS/sirohaem_BS"/>
</dbReference>
<dbReference type="NCBIfam" id="TIGR02041">
    <property type="entry name" value="CysI"/>
    <property type="match status" value="1"/>
</dbReference>
<dbReference type="NCBIfam" id="NF010029">
    <property type="entry name" value="PRK13504.1"/>
    <property type="match status" value="1"/>
</dbReference>
<dbReference type="PANTHER" id="PTHR11493:SF47">
    <property type="entry name" value="SULFITE REDUCTASE [NADPH] SUBUNIT BETA"/>
    <property type="match status" value="1"/>
</dbReference>
<dbReference type="PANTHER" id="PTHR11493">
    <property type="entry name" value="SULFITE REDUCTASE [NADPH] SUBUNIT BETA-RELATED"/>
    <property type="match status" value="1"/>
</dbReference>
<dbReference type="Pfam" id="PF01077">
    <property type="entry name" value="NIR_SIR"/>
    <property type="match status" value="1"/>
</dbReference>
<dbReference type="Pfam" id="PF03460">
    <property type="entry name" value="NIR_SIR_ferr"/>
    <property type="match status" value="2"/>
</dbReference>
<dbReference type="PRINTS" id="PR00397">
    <property type="entry name" value="SIROHAEM"/>
</dbReference>
<dbReference type="SUPFAM" id="SSF56014">
    <property type="entry name" value="Nitrite and sulphite reductase 4Fe-4S domain-like"/>
    <property type="match status" value="2"/>
</dbReference>
<dbReference type="SUPFAM" id="SSF55124">
    <property type="entry name" value="Nitrite/Sulfite reductase N-terminal domain-like"/>
    <property type="match status" value="2"/>
</dbReference>
<dbReference type="PROSITE" id="PS00365">
    <property type="entry name" value="NIR_SIR"/>
    <property type="match status" value="1"/>
</dbReference>
<name>CYSI_STAEQ</name>
<keyword id="KW-0004">4Fe-4S</keyword>
<keyword id="KW-0028">Amino-acid biosynthesis</keyword>
<keyword id="KW-0198">Cysteine biosynthesis</keyword>
<keyword id="KW-0349">Heme</keyword>
<keyword id="KW-0408">Iron</keyword>
<keyword id="KW-0411">Iron-sulfur</keyword>
<keyword id="KW-0479">Metal-binding</keyword>
<keyword id="KW-0521">NADP</keyword>
<keyword id="KW-0560">Oxidoreductase</keyword>
<keyword id="KW-1185">Reference proteome</keyword>
<gene>
    <name evidence="1" type="primary">cysI</name>
    <name type="ordered locus">SERP2190</name>
</gene>
<reference key="1">
    <citation type="journal article" date="2005" name="J. Bacteriol.">
        <title>Insights on evolution of virulence and resistance from the complete genome analysis of an early methicillin-resistant Staphylococcus aureus strain and a biofilm-producing methicillin-resistant Staphylococcus epidermidis strain.</title>
        <authorList>
            <person name="Gill S.R."/>
            <person name="Fouts D.E."/>
            <person name="Archer G.L."/>
            <person name="Mongodin E.F."/>
            <person name="DeBoy R.T."/>
            <person name="Ravel J."/>
            <person name="Paulsen I.T."/>
            <person name="Kolonay J.F."/>
            <person name="Brinkac L.M."/>
            <person name="Beanan M.J."/>
            <person name="Dodson R.J."/>
            <person name="Daugherty S.C."/>
            <person name="Madupu R."/>
            <person name="Angiuoli S.V."/>
            <person name="Durkin A.S."/>
            <person name="Haft D.H."/>
            <person name="Vamathevan J.J."/>
            <person name="Khouri H."/>
            <person name="Utterback T.R."/>
            <person name="Lee C."/>
            <person name="Dimitrov G."/>
            <person name="Jiang L."/>
            <person name="Qin H."/>
            <person name="Weidman J."/>
            <person name="Tran K."/>
            <person name="Kang K.H."/>
            <person name="Hance I.R."/>
            <person name="Nelson K.E."/>
            <person name="Fraser C.M."/>
        </authorList>
    </citation>
    <scope>NUCLEOTIDE SEQUENCE [LARGE SCALE GENOMIC DNA]</scope>
    <source>
        <strain>ATCC 35984 / DSM 28319 / BCRC 17069 / CCUG 31568 / BM 3577 / RP62A</strain>
    </source>
</reference>
<feature type="chain" id="PRO_0000388522" description="Sulfite reductase [NADPH] hemoprotein beta-component">
    <location>
        <begin position="1"/>
        <end position="572"/>
    </location>
</feature>
<feature type="binding site" evidence="1">
    <location>
        <position position="437"/>
    </location>
    <ligand>
        <name>[4Fe-4S] cluster</name>
        <dbReference type="ChEBI" id="CHEBI:49883"/>
    </ligand>
</feature>
<feature type="binding site" evidence="1">
    <location>
        <position position="443"/>
    </location>
    <ligand>
        <name>[4Fe-4S] cluster</name>
        <dbReference type="ChEBI" id="CHEBI:49883"/>
    </ligand>
</feature>
<feature type="binding site" evidence="1">
    <location>
        <position position="482"/>
    </location>
    <ligand>
        <name>[4Fe-4S] cluster</name>
        <dbReference type="ChEBI" id="CHEBI:49883"/>
    </ligand>
</feature>
<feature type="binding site" evidence="1">
    <location>
        <position position="486"/>
    </location>
    <ligand>
        <name>[4Fe-4S] cluster</name>
        <dbReference type="ChEBI" id="CHEBI:49883"/>
    </ligand>
</feature>
<feature type="binding site" description="axial binding residue" evidence="1">
    <location>
        <position position="486"/>
    </location>
    <ligand>
        <name>siroheme</name>
        <dbReference type="ChEBI" id="CHEBI:60052"/>
    </ligand>
    <ligandPart>
        <name>Fe</name>
        <dbReference type="ChEBI" id="CHEBI:18248"/>
    </ligandPart>
</feature>
<sequence>MVNTNNHISDELDKNLDEMEFLKANSDFLRGTIEQSLANPITGSITQDDAKLLKFHGSYMQDDRDLRDERRKQKLEPAYSFMIRVRVPGGKATPEQWIAMDDISNQYANHTIKLTTRQAFQFHGILKRNLKQSMKNINHAVLDSIAACGDVNRNTMCNPNPYQSQVHKEINDYATRISNHLLPRTNAYHEIWLDGEKVLDSSEEKEPIYGNTYLPRKFKIGIAVPPSNDIDVYSQDIGLIAIVEQDELIGFNVTIGGGMGMTHGITETYPQLGRLIGFIPKEKVVDVCEKILTIQRDYGNRENRKNARFKYTVDRLGETWVTEELNRRLGWEIKAPRDFEFEHNGDRLGWIEGINNWNFTLFIQNGRVKDTEDYLLKTALREIAEIHTGDFRLSPNQNLVIANVSPEKKEEIQAIIDKYKLTDGKNYTGLRRNSMACVAFPTCGLAMAESERYLPSLITKIEDLLDESGLKEEEITIRMTGCPNGCARPALAEIAFIGKAPGKYNMYLGGSFKGERLNKIYKENIDENEILESLRPLLLRYSKERLDGEHFGDFVIRDGVIAKVHDGRDFHS</sequence>